<evidence type="ECO:0000250" key="1"/>
<evidence type="ECO:0000255" key="2">
    <source>
        <dbReference type="PROSITE-ProRule" id="PRU00380"/>
    </source>
</evidence>
<evidence type="ECO:0000255" key="3">
    <source>
        <dbReference type="PROSITE-ProRule" id="PRU00981"/>
    </source>
</evidence>
<evidence type="ECO:0000256" key="4">
    <source>
        <dbReference type="SAM" id="MobiDB-lite"/>
    </source>
</evidence>
<evidence type="ECO:0000269" key="5">
    <source>
    </source>
</evidence>
<evidence type="ECO:0000269" key="6">
    <source>
    </source>
</evidence>
<evidence type="ECO:0000305" key="7"/>
<organism>
    <name type="scientific">Homo sapiens</name>
    <name type="common">Human</name>
    <dbReference type="NCBI Taxonomy" id="9606"/>
    <lineage>
        <taxon>Eukaryota</taxon>
        <taxon>Metazoa</taxon>
        <taxon>Chordata</taxon>
        <taxon>Craniata</taxon>
        <taxon>Vertebrata</taxon>
        <taxon>Euteleostomi</taxon>
        <taxon>Mammalia</taxon>
        <taxon>Eutheria</taxon>
        <taxon>Euarchontoglires</taxon>
        <taxon>Primates</taxon>
        <taxon>Haplorrhini</taxon>
        <taxon>Catarrhini</taxon>
        <taxon>Hominidae</taxon>
        <taxon>Homo</taxon>
    </lineage>
</organism>
<feature type="chain" id="PRO_0000252422" description="Transcription factor HES-7">
    <location>
        <begin position="1"/>
        <end position="225"/>
    </location>
</feature>
<feature type="domain" description="bHLH" evidence="3">
    <location>
        <begin position="12"/>
        <end position="69"/>
    </location>
</feature>
<feature type="domain" description="Orange" evidence="2">
    <location>
        <begin position="92"/>
        <end position="122"/>
    </location>
</feature>
<feature type="region of interest" description="Disordered" evidence="4">
    <location>
        <begin position="125"/>
        <end position="225"/>
    </location>
</feature>
<feature type="short sequence motif" description="WRPW motif">
    <location>
        <begin position="221"/>
        <end position="224"/>
    </location>
</feature>
<feature type="compositionally biased region" description="Low complexity" evidence="4">
    <location>
        <begin position="147"/>
        <end position="158"/>
    </location>
</feature>
<feature type="compositionally biased region" description="Pro residues" evidence="4">
    <location>
        <begin position="212"/>
        <end position="225"/>
    </location>
</feature>
<feature type="splice variant" id="VSP_047334" description="In isoform 2." evidence="7">
    <original>P</original>
    <variation>PPAAAA</variation>
    <location>
        <position position="74"/>
    </location>
</feature>
<feature type="sequence variant" id="VAR_064921" description="In SCDO4; dbSNP:rs113994160." evidence="5">
    <original>R</original>
    <variation>W</variation>
    <location>
        <position position="25"/>
    </location>
</feature>
<feature type="sequence variant" id="VAR_064922" description="In SCDO4; dbSNP:rs387906979." evidence="6">
    <original>I</original>
    <variation>V</variation>
    <location>
        <position position="58"/>
    </location>
</feature>
<feature type="sequence variant" id="VAR_064923" description="In SCDO4; dbSNP:rs387906978." evidence="6">
    <original>D</original>
    <variation>Y</variation>
    <location>
        <position position="186"/>
    </location>
</feature>
<feature type="sequence conflict" description="In Ref. 1; BAB39525." evidence="7" ref="1">
    <original>E</original>
    <variation>K</variation>
    <location>
        <position position="86"/>
    </location>
</feature>
<feature type="sequence conflict" description="In Ref. 1; BAB39525." evidence="7" ref="1">
    <original>F</original>
    <variation>I</variation>
    <location>
        <position position="106"/>
    </location>
</feature>
<feature type="sequence conflict" description="In Ref. 1; BAB39525." evidence="7" ref="1">
    <original>A</original>
    <variation>T</variation>
    <location>
        <position position="113"/>
    </location>
</feature>
<keyword id="KW-0025">Alternative splicing</keyword>
<keyword id="KW-0217">Developmental protein</keyword>
<keyword id="KW-0225">Disease variant</keyword>
<keyword id="KW-0238">DNA-binding</keyword>
<keyword id="KW-0242">Dwarfism</keyword>
<keyword id="KW-0539">Nucleus</keyword>
<keyword id="KW-1267">Proteomics identification</keyword>
<keyword id="KW-1185">Reference proteome</keyword>
<keyword id="KW-0678">Repressor</keyword>
<keyword id="KW-0804">Transcription</keyword>
<keyword id="KW-0805">Transcription regulation</keyword>
<accession>Q9BYE0</accession>
<accession>F8VPC9</accession>
<sequence>MVTRDRAENRDGPKMLKPLVEKRRRDRINRSLEELRLLLLERTRDQNLRNPKLEKAEILEFAVGYLRERSRVEPPGVPRSPVQDAEALASCYLSGFRECLLRLAAFAHDASPAARAQLFSALHGYLRPKPPRPKPVDPRPPAPRPSLDPAAPALGPALHQRPPVHQGHPSPRCAWSPSLCSPRAGDSGAPAPLTGLLPPPPPPHRQDGAPKAPLPPPPAFWRPWP</sequence>
<dbReference type="EMBL" id="AB049064">
    <property type="protein sequence ID" value="BAB39525.1"/>
    <property type="molecule type" value="mRNA"/>
</dbReference>
<dbReference type="EMBL" id="AC129492">
    <property type="status" value="NOT_ANNOTATED_CDS"/>
    <property type="molecule type" value="Genomic_DNA"/>
</dbReference>
<dbReference type="EMBL" id="BC039887">
    <property type="status" value="NOT_ANNOTATED_CDS"/>
    <property type="molecule type" value="mRNA"/>
</dbReference>
<dbReference type="CCDS" id="CCDS42258.1">
    <molecule id="Q9BYE0-1"/>
</dbReference>
<dbReference type="CCDS" id="CCDS54085.1">
    <molecule id="Q9BYE0-2"/>
</dbReference>
<dbReference type="RefSeq" id="NP_001159439.1">
    <molecule id="Q9BYE0-2"/>
    <property type="nucleotide sequence ID" value="NM_001165967.2"/>
</dbReference>
<dbReference type="RefSeq" id="NP_115969.2">
    <molecule id="Q9BYE0-1"/>
    <property type="nucleotide sequence ID" value="NM_032580.4"/>
</dbReference>
<dbReference type="SMR" id="Q9BYE0"/>
<dbReference type="BioGRID" id="124187">
    <property type="interactions" value="9"/>
</dbReference>
<dbReference type="ELM" id="Q9BYE0"/>
<dbReference type="FunCoup" id="Q9BYE0">
    <property type="interactions" value="734"/>
</dbReference>
<dbReference type="IntAct" id="Q9BYE0">
    <property type="interactions" value="5"/>
</dbReference>
<dbReference type="STRING" id="9606.ENSP00000446205"/>
<dbReference type="iPTMnet" id="Q9BYE0"/>
<dbReference type="PhosphoSitePlus" id="Q9BYE0"/>
<dbReference type="BioMuta" id="HES7"/>
<dbReference type="DMDM" id="296434525"/>
<dbReference type="jPOST" id="Q9BYE0"/>
<dbReference type="MassIVE" id="Q9BYE0"/>
<dbReference type="PaxDb" id="9606-ENSP00000446205"/>
<dbReference type="PeptideAtlas" id="Q9BYE0"/>
<dbReference type="Antibodypedia" id="6182">
    <property type="antibodies" value="219 antibodies from 27 providers"/>
</dbReference>
<dbReference type="DNASU" id="84667"/>
<dbReference type="Ensembl" id="ENST00000317814.8">
    <molecule id="Q9BYE0-1"/>
    <property type="protein sequence ID" value="ENSP00000314774.4"/>
    <property type="gene ID" value="ENSG00000179111.9"/>
</dbReference>
<dbReference type="Ensembl" id="ENST00000541682.7">
    <molecule id="Q9BYE0-2"/>
    <property type="protein sequence ID" value="ENSP00000446205.2"/>
    <property type="gene ID" value="ENSG00000179111.9"/>
</dbReference>
<dbReference type="GeneID" id="84667"/>
<dbReference type="KEGG" id="hsa:84667"/>
<dbReference type="MANE-Select" id="ENST00000541682.7">
    <molecule id="Q9BYE0-2"/>
    <property type="protein sequence ID" value="ENSP00000446205.2"/>
    <property type="RefSeq nucleotide sequence ID" value="NM_001165967.2"/>
    <property type="RefSeq protein sequence ID" value="NP_001159439.1"/>
</dbReference>
<dbReference type="UCSC" id="uc002gkb.3">
    <molecule id="Q9BYE0-1"/>
    <property type="organism name" value="human"/>
</dbReference>
<dbReference type="AGR" id="HGNC:15977"/>
<dbReference type="CTD" id="84667"/>
<dbReference type="DisGeNET" id="84667"/>
<dbReference type="GeneCards" id="HES7"/>
<dbReference type="GeneReviews" id="HES7"/>
<dbReference type="HGNC" id="HGNC:15977">
    <property type="gene designation" value="HES7"/>
</dbReference>
<dbReference type="HPA" id="ENSG00000179111">
    <property type="expression patterns" value="Tissue enhanced (brain)"/>
</dbReference>
<dbReference type="MalaCards" id="HES7"/>
<dbReference type="MIM" id="608059">
    <property type="type" value="gene"/>
</dbReference>
<dbReference type="MIM" id="613686">
    <property type="type" value="phenotype"/>
</dbReference>
<dbReference type="neXtProt" id="NX_Q9BYE0"/>
<dbReference type="OpenTargets" id="ENSG00000179111"/>
<dbReference type="Orphanet" id="2311">
    <property type="disease" value="Autosomal recessive spondylocostal dysostosis"/>
</dbReference>
<dbReference type="PharmGKB" id="PA29254"/>
<dbReference type="VEuPathDB" id="HostDB:ENSG00000179111"/>
<dbReference type="eggNOG" id="KOG4304">
    <property type="taxonomic scope" value="Eukaryota"/>
</dbReference>
<dbReference type="GeneTree" id="ENSGT00730000111282"/>
<dbReference type="HOGENOM" id="CLU_068550_6_0_1"/>
<dbReference type="InParanoid" id="Q9BYE0"/>
<dbReference type="OMA" id="LESEKMW"/>
<dbReference type="OrthoDB" id="6085656at2759"/>
<dbReference type="PAN-GO" id="Q9BYE0">
    <property type="GO annotations" value="6 GO annotations based on evolutionary models"/>
</dbReference>
<dbReference type="PhylomeDB" id="Q9BYE0"/>
<dbReference type="TreeFam" id="TF351373"/>
<dbReference type="PathwayCommons" id="Q9BYE0"/>
<dbReference type="Reactome" id="R-HSA-9824272">
    <property type="pathway name" value="Somitogenesis"/>
</dbReference>
<dbReference type="SignaLink" id="Q9BYE0"/>
<dbReference type="BioGRID-ORCS" id="84667">
    <property type="hits" value="36 hits in 1165 CRISPR screens"/>
</dbReference>
<dbReference type="GenomeRNAi" id="84667"/>
<dbReference type="Pharos" id="Q9BYE0">
    <property type="development level" value="Tbio"/>
</dbReference>
<dbReference type="PRO" id="PR:Q9BYE0"/>
<dbReference type="Proteomes" id="UP000005640">
    <property type="component" value="Chromosome 17"/>
</dbReference>
<dbReference type="RNAct" id="Q9BYE0">
    <property type="molecule type" value="protein"/>
</dbReference>
<dbReference type="Bgee" id="ENSG00000179111">
    <property type="expression patterns" value="Expressed in cortical plate and 96 other cell types or tissues"/>
</dbReference>
<dbReference type="ExpressionAtlas" id="Q9BYE0">
    <property type="expression patterns" value="baseline and differential"/>
</dbReference>
<dbReference type="GO" id="GO:0000785">
    <property type="term" value="C:chromatin"/>
    <property type="evidence" value="ECO:0000247"/>
    <property type="project" value="NTNU_SB"/>
</dbReference>
<dbReference type="GO" id="GO:0005634">
    <property type="term" value="C:nucleus"/>
    <property type="evidence" value="ECO:0000318"/>
    <property type="project" value="GO_Central"/>
</dbReference>
<dbReference type="GO" id="GO:0003677">
    <property type="term" value="F:DNA binding"/>
    <property type="evidence" value="ECO:0000303"/>
    <property type="project" value="UniProtKB"/>
</dbReference>
<dbReference type="GO" id="GO:0000981">
    <property type="term" value="F:DNA-binding transcription factor activity, RNA polymerase II-specific"/>
    <property type="evidence" value="ECO:0000247"/>
    <property type="project" value="NTNU_SB"/>
</dbReference>
<dbReference type="GO" id="GO:0046983">
    <property type="term" value="F:protein dimerization activity"/>
    <property type="evidence" value="ECO:0007669"/>
    <property type="project" value="InterPro"/>
</dbReference>
<dbReference type="GO" id="GO:0000978">
    <property type="term" value="F:RNA polymerase II cis-regulatory region sequence-specific DNA binding"/>
    <property type="evidence" value="ECO:0000318"/>
    <property type="project" value="GO_Central"/>
</dbReference>
<dbReference type="GO" id="GO:1990837">
    <property type="term" value="F:sequence-specific double-stranded DNA binding"/>
    <property type="evidence" value="ECO:0000314"/>
    <property type="project" value="ARUK-UCL"/>
</dbReference>
<dbReference type="GO" id="GO:0007498">
    <property type="term" value="P:mesoderm development"/>
    <property type="evidence" value="ECO:0000303"/>
    <property type="project" value="UniProtKB"/>
</dbReference>
<dbReference type="GO" id="GO:0000122">
    <property type="term" value="P:negative regulation of transcription by RNA polymerase II"/>
    <property type="evidence" value="ECO:0007669"/>
    <property type="project" value="Ensembl"/>
</dbReference>
<dbReference type="GO" id="GO:0007219">
    <property type="term" value="P:Notch signaling pathway"/>
    <property type="evidence" value="ECO:0007669"/>
    <property type="project" value="Ensembl"/>
</dbReference>
<dbReference type="GO" id="GO:0036342">
    <property type="term" value="P:post-anal tail morphogenesis"/>
    <property type="evidence" value="ECO:0007669"/>
    <property type="project" value="Ensembl"/>
</dbReference>
<dbReference type="GO" id="GO:0050767">
    <property type="term" value="P:regulation of neurogenesis"/>
    <property type="evidence" value="ECO:0000318"/>
    <property type="project" value="GO_Central"/>
</dbReference>
<dbReference type="GO" id="GO:0048511">
    <property type="term" value="P:rhythmic process"/>
    <property type="evidence" value="ECO:0007669"/>
    <property type="project" value="Ensembl"/>
</dbReference>
<dbReference type="GO" id="GO:0001501">
    <property type="term" value="P:skeletal system development"/>
    <property type="evidence" value="ECO:0007669"/>
    <property type="project" value="Ensembl"/>
</dbReference>
<dbReference type="GO" id="GO:0001756">
    <property type="term" value="P:somitogenesis"/>
    <property type="evidence" value="ECO:0007669"/>
    <property type="project" value="Ensembl"/>
</dbReference>
<dbReference type="CDD" id="cd11462">
    <property type="entry name" value="bHLH-O_HES7"/>
    <property type="match status" value="1"/>
</dbReference>
<dbReference type="FunFam" id="4.10.280.10:FF:000063">
    <property type="entry name" value="transcription factor HES-7 isoform X1"/>
    <property type="match status" value="1"/>
</dbReference>
<dbReference type="Gene3D" id="4.10.280.10">
    <property type="entry name" value="Helix-loop-helix DNA-binding domain"/>
    <property type="match status" value="1"/>
</dbReference>
<dbReference type="InterPro" id="IPR011598">
    <property type="entry name" value="bHLH_dom"/>
</dbReference>
<dbReference type="InterPro" id="IPR032644">
    <property type="entry name" value="HES-7_bHLH-O"/>
</dbReference>
<dbReference type="InterPro" id="IPR050370">
    <property type="entry name" value="HES_HEY"/>
</dbReference>
<dbReference type="InterPro" id="IPR036638">
    <property type="entry name" value="HLH_DNA-bd_sf"/>
</dbReference>
<dbReference type="InterPro" id="IPR003650">
    <property type="entry name" value="Orange_dom"/>
</dbReference>
<dbReference type="PANTHER" id="PTHR10985">
    <property type="entry name" value="BASIC HELIX-LOOP-HELIX TRANSCRIPTION FACTOR, HES-RELATED"/>
    <property type="match status" value="1"/>
</dbReference>
<dbReference type="Pfam" id="PF00010">
    <property type="entry name" value="HLH"/>
    <property type="match status" value="1"/>
</dbReference>
<dbReference type="SMART" id="SM00353">
    <property type="entry name" value="HLH"/>
    <property type="match status" value="1"/>
</dbReference>
<dbReference type="SUPFAM" id="SSF47459">
    <property type="entry name" value="HLH, helix-loop-helix DNA-binding domain"/>
    <property type="match status" value="1"/>
</dbReference>
<dbReference type="PROSITE" id="PS50888">
    <property type="entry name" value="BHLH"/>
    <property type="match status" value="1"/>
</dbReference>
<dbReference type="PROSITE" id="PS51054">
    <property type="entry name" value="ORANGE"/>
    <property type="match status" value="1"/>
</dbReference>
<reference key="1">
    <citation type="journal article" date="2001" name="Genes Cells">
        <title>Hes7: a bHLH-type repressor gene regulated by Notch and expressed in the presomitic mesoderm.</title>
        <authorList>
            <person name="Bessho Y."/>
            <person name="Miyoshi G."/>
            <person name="Sakata R."/>
            <person name="Kageyama R."/>
        </authorList>
    </citation>
    <scope>NUCLEOTIDE SEQUENCE [MRNA] (ISOFORM 1)</scope>
</reference>
<reference key="2">
    <citation type="journal article" date="2006" name="Nature">
        <title>DNA sequence of human chromosome 17 and analysis of rearrangement in the human lineage.</title>
        <authorList>
            <person name="Zody M.C."/>
            <person name="Garber M."/>
            <person name="Adams D.J."/>
            <person name="Sharpe T."/>
            <person name="Harrow J."/>
            <person name="Lupski J.R."/>
            <person name="Nicholson C."/>
            <person name="Searle S.M."/>
            <person name="Wilming L."/>
            <person name="Young S.K."/>
            <person name="Abouelleil A."/>
            <person name="Allen N.R."/>
            <person name="Bi W."/>
            <person name="Bloom T."/>
            <person name="Borowsky M.L."/>
            <person name="Bugalter B.E."/>
            <person name="Butler J."/>
            <person name="Chang J.L."/>
            <person name="Chen C.-K."/>
            <person name="Cook A."/>
            <person name="Corum B."/>
            <person name="Cuomo C.A."/>
            <person name="de Jong P.J."/>
            <person name="DeCaprio D."/>
            <person name="Dewar K."/>
            <person name="FitzGerald M."/>
            <person name="Gilbert J."/>
            <person name="Gibson R."/>
            <person name="Gnerre S."/>
            <person name="Goldstein S."/>
            <person name="Grafham D.V."/>
            <person name="Grocock R."/>
            <person name="Hafez N."/>
            <person name="Hagopian D.S."/>
            <person name="Hart E."/>
            <person name="Norman C.H."/>
            <person name="Humphray S."/>
            <person name="Jaffe D.B."/>
            <person name="Jones M."/>
            <person name="Kamal M."/>
            <person name="Khodiyar V.K."/>
            <person name="LaButti K."/>
            <person name="Laird G."/>
            <person name="Lehoczky J."/>
            <person name="Liu X."/>
            <person name="Lokyitsang T."/>
            <person name="Loveland J."/>
            <person name="Lui A."/>
            <person name="Macdonald P."/>
            <person name="Major J.E."/>
            <person name="Matthews L."/>
            <person name="Mauceli E."/>
            <person name="McCarroll S.A."/>
            <person name="Mihalev A.H."/>
            <person name="Mudge J."/>
            <person name="Nguyen C."/>
            <person name="Nicol R."/>
            <person name="O'Leary S.B."/>
            <person name="Osoegawa K."/>
            <person name="Schwartz D.C."/>
            <person name="Shaw-Smith C."/>
            <person name="Stankiewicz P."/>
            <person name="Steward C."/>
            <person name="Swarbreck D."/>
            <person name="Venkataraman V."/>
            <person name="Whittaker C.A."/>
            <person name="Yang X."/>
            <person name="Zimmer A.R."/>
            <person name="Bradley A."/>
            <person name="Hubbard T."/>
            <person name="Birren B.W."/>
            <person name="Rogers J."/>
            <person name="Lander E.S."/>
            <person name="Nusbaum C."/>
        </authorList>
    </citation>
    <scope>NUCLEOTIDE SEQUENCE [LARGE SCALE GENOMIC DNA]</scope>
</reference>
<reference key="3">
    <citation type="journal article" date="2004" name="Genome Res.">
        <title>The status, quality, and expansion of the NIH full-length cDNA project: the Mammalian Gene Collection (MGC).</title>
        <authorList>
            <consortium name="The MGC Project Team"/>
        </authorList>
    </citation>
    <scope>PARTIAL NUCLEOTIDE SEQUENCE [LARGE SCALE MRNA] (ISOFORM 2)</scope>
</reference>
<reference key="4">
    <citation type="journal article" date="2008" name="Hum. Mol. Genet.">
        <title>Mutation of Hairy-and-Enhancer-of-Split-7 in humans causes spondylocostal dysostosis.</title>
        <authorList>
            <person name="Sparrow D.B."/>
            <person name="Guillen-Navarro E."/>
            <person name="Fatkin D."/>
            <person name="Dunwoodie S.L."/>
        </authorList>
    </citation>
    <scope>VARIANT SCDO4 TRP-25</scope>
</reference>
<reference key="5">
    <citation type="journal article" date="2010" name="Eur. J. Hum. Genet.">
        <title>Two novel missense mutations in HAIRY-AND-ENHANCER-OF-SPLIT-7 in a family with spondylocostal dysostosis.</title>
        <authorList>
            <person name="Sparrow D.B."/>
            <person name="Sillence D."/>
            <person name="Wouters M.A."/>
            <person name="Turnpenny P.D."/>
            <person name="Dunwoodie S.L."/>
        </authorList>
    </citation>
    <scope>VARIANTS SCDO4 VAL-58 AND TYR-186</scope>
</reference>
<proteinExistence type="evidence at protein level"/>
<gene>
    <name type="primary">HES7</name>
    <name type="synonym">BHLHB37</name>
</gene>
<protein>
    <recommendedName>
        <fullName>Transcription factor HES-7</fullName>
        <shortName>hHes7</shortName>
    </recommendedName>
    <alternativeName>
        <fullName>Class B basic helix-loop-helix protein 37</fullName>
        <shortName>bHLHb37</shortName>
    </alternativeName>
    <alternativeName>
        <fullName>Hairy and enhancer of split 7</fullName>
    </alternativeName>
    <alternativeName>
        <fullName>bHLH factor Hes7</fullName>
    </alternativeName>
</protein>
<name>HES7_HUMAN</name>
<comment type="function">
    <text evidence="1">Transcriptional repressor. Represses transcription from both N box- and E box-containing promoters. May with HES1, cooperatively regulate somite formation in the presomitic mesoderm (PSM). May function as a segmentation clock, which is essential for coordinated somite segmentation (By similarity).</text>
</comment>
<comment type="subunit">
    <text evidence="1">Transcription repression requires formation of a complex with a corepressor protein of the Groucho/TLE family.</text>
</comment>
<comment type="interaction">
    <interactant intactId="EBI-12163087">
        <id>Q9BYE0</id>
    </interactant>
    <interactant intactId="EBI-10232538">
        <id>Q8WWB5</id>
        <label>PIH1D2</label>
    </interactant>
    <organismsDiffer>false</organismsDiffer>
    <experiments>3</experiments>
</comment>
<comment type="interaction">
    <interactant intactId="EBI-12163087">
        <id>Q9BYE0</id>
    </interactant>
    <interactant intactId="EBI-1567797">
        <id>Q8WWY3</id>
        <label>PRPF31</label>
    </interactant>
    <organismsDiffer>false</organismsDiffer>
    <experiments>3</experiments>
</comment>
<comment type="interaction">
    <interactant intactId="EBI-12163087">
        <id>Q9BYE0</id>
    </interactant>
    <interactant intactId="EBI-347462">
        <id>P47897</id>
        <label>QARS1</label>
    </interactant>
    <organismsDiffer>false</organismsDiffer>
    <experiments>3</experiments>
</comment>
<comment type="interaction">
    <interactant intactId="EBI-12163087">
        <id>Q9BYE0</id>
    </interactant>
    <interactant intactId="EBI-710310">
        <id>Q15560</id>
        <label>TCEA2</label>
    </interactant>
    <organismsDiffer>false</organismsDiffer>
    <experiments>3</experiments>
</comment>
<comment type="interaction">
    <interactant intactId="EBI-12163087">
        <id>Q9BYE0</id>
    </interactant>
    <interactant intactId="EBI-11955057">
        <id>Q8N8B7-2</id>
        <label>TCEANC</label>
    </interactant>
    <organismsDiffer>false</organismsDiffer>
    <experiments>3</experiments>
</comment>
<comment type="subcellular location">
    <subcellularLocation>
        <location evidence="7">Nucleus</location>
    </subcellularLocation>
</comment>
<comment type="alternative products">
    <event type="alternative splicing"/>
    <isoform>
        <id>Q9BYE0-1</id>
        <name>1</name>
        <sequence type="displayed"/>
    </isoform>
    <isoform>
        <id>Q9BYE0-2</id>
        <name>2</name>
        <sequence type="described" ref="VSP_047334"/>
    </isoform>
</comment>
<comment type="domain">
    <text>Has a particular type of basic domain which includes a helix-interrupting proline.</text>
</comment>
<comment type="domain">
    <text evidence="1">The C-terminal WRPW motif is a transcriptional repression motif which is necessary for interaction with Groucho/TLE family members, transcriptional corepressors recruited to specific target DNA by Hairy-related proteins.</text>
</comment>
<comment type="disease" evidence="5 6">
    <disease id="DI-02536">
        <name>Spondylocostal dysostosis 4, autosomal recessive</name>
        <acronym>SCDO4</acronym>
        <description>A rare condition of variable severity characterized by vertebral and costal anomalies. The main feature include dwarfism, vertebral fusion, hemivertebrae, posterior rib fusion, reduced rib number, and other rib malformations.</description>
        <dbReference type="MIM" id="613686"/>
    </disease>
    <text>The disease is caused by variants affecting the gene represented in this entry.</text>
</comment>